<evidence type="ECO:0000255" key="1">
    <source>
        <dbReference type="HAMAP-Rule" id="MF_00465"/>
    </source>
</evidence>
<protein>
    <recommendedName>
        <fullName evidence="1">S-adenosylmethionine decarboxylase proenzyme</fullName>
        <shortName evidence="1">AdoMetDC</shortName>
        <shortName evidence="1">SAMDC</shortName>
        <ecNumber evidence="1">4.1.1.50</ecNumber>
    </recommendedName>
    <component>
        <recommendedName>
            <fullName evidence="1">S-adenosylmethionine decarboxylase beta chain</fullName>
        </recommendedName>
    </component>
    <component>
        <recommendedName>
            <fullName evidence="1">S-adenosylmethionine decarboxylase alpha chain</fullName>
        </recommendedName>
    </component>
</protein>
<sequence>MKKLKLHGFNNLTKSLSFCIYDICYAKTAEERDGYIAYIDELYNANRLTEILSETCSIIGANILNIARQDYEPQGASVTILVSEEPIDPKLIDQTEHPGPLPETVVAHLDKSHICVHTYPESHPEGGLCTFRADIEVSTCGVISPLKALNYLIHQLESDIVTIDYRVRGFTRDVNGMKHFIDHEINSIQNFMSEDMKSLYDMVDVNVYQENIFHTKMLLKEFDLKHYMFHTKPEDLTETERQEITAALWKEMREIYYGRNISAV</sequence>
<organism>
    <name type="scientific">Salmonella schwarzengrund (strain CVM19633)</name>
    <dbReference type="NCBI Taxonomy" id="439843"/>
    <lineage>
        <taxon>Bacteria</taxon>
        <taxon>Pseudomonadati</taxon>
        <taxon>Pseudomonadota</taxon>
        <taxon>Gammaproteobacteria</taxon>
        <taxon>Enterobacterales</taxon>
        <taxon>Enterobacteriaceae</taxon>
        <taxon>Salmonella</taxon>
    </lineage>
</organism>
<reference key="1">
    <citation type="journal article" date="2011" name="J. Bacteriol.">
        <title>Comparative genomics of 28 Salmonella enterica isolates: evidence for CRISPR-mediated adaptive sublineage evolution.</title>
        <authorList>
            <person name="Fricke W.F."/>
            <person name="Mammel M.K."/>
            <person name="McDermott P.F."/>
            <person name="Tartera C."/>
            <person name="White D.G."/>
            <person name="Leclerc J.E."/>
            <person name="Ravel J."/>
            <person name="Cebula T.A."/>
        </authorList>
    </citation>
    <scope>NUCLEOTIDE SEQUENCE [LARGE SCALE GENOMIC DNA]</scope>
    <source>
        <strain>CVM19633</strain>
    </source>
</reference>
<dbReference type="EC" id="4.1.1.50" evidence="1"/>
<dbReference type="EMBL" id="CP001127">
    <property type="protein sequence ID" value="ACF88983.1"/>
    <property type="molecule type" value="Genomic_DNA"/>
</dbReference>
<dbReference type="RefSeq" id="WP_000734276.1">
    <property type="nucleotide sequence ID" value="NC_011094.1"/>
</dbReference>
<dbReference type="KEGG" id="sew:SeSA_A0184"/>
<dbReference type="HOGENOM" id="CLU_092007_0_0_6"/>
<dbReference type="UniPathway" id="UPA00331">
    <property type="reaction ID" value="UER00451"/>
</dbReference>
<dbReference type="Proteomes" id="UP000001865">
    <property type="component" value="Chromosome"/>
</dbReference>
<dbReference type="GO" id="GO:0005829">
    <property type="term" value="C:cytosol"/>
    <property type="evidence" value="ECO:0007669"/>
    <property type="project" value="TreeGrafter"/>
</dbReference>
<dbReference type="GO" id="GO:0004014">
    <property type="term" value="F:adenosylmethionine decarboxylase activity"/>
    <property type="evidence" value="ECO:0007669"/>
    <property type="project" value="UniProtKB-UniRule"/>
</dbReference>
<dbReference type="GO" id="GO:0008295">
    <property type="term" value="P:spermidine biosynthetic process"/>
    <property type="evidence" value="ECO:0007669"/>
    <property type="project" value="UniProtKB-UniRule"/>
</dbReference>
<dbReference type="FunFam" id="3.60.90.10:FF:000001">
    <property type="entry name" value="S-adenosylmethionine decarboxylase proenzyme"/>
    <property type="match status" value="1"/>
</dbReference>
<dbReference type="Gene3D" id="3.60.90.10">
    <property type="entry name" value="S-adenosylmethionine decarboxylase"/>
    <property type="match status" value="1"/>
</dbReference>
<dbReference type="HAMAP" id="MF_00465">
    <property type="entry name" value="AdoMetDC_2"/>
    <property type="match status" value="1"/>
</dbReference>
<dbReference type="InterPro" id="IPR003826">
    <property type="entry name" value="AdoMetDC_fam_prok"/>
</dbReference>
<dbReference type="InterPro" id="IPR009165">
    <property type="entry name" value="S-AdoMet_deCO2ase_bac"/>
</dbReference>
<dbReference type="InterPro" id="IPR016067">
    <property type="entry name" value="S-AdoMet_deCO2ase_core"/>
</dbReference>
<dbReference type="NCBIfam" id="TIGR03331">
    <property type="entry name" value="SAM_DCase_Eco"/>
    <property type="match status" value="1"/>
</dbReference>
<dbReference type="PANTHER" id="PTHR33866">
    <property type="entry name" value="S-ADENOSYLMETHIONINE DECARBOXYLASE PROENZYME"/>
    <property type="match status" value="1"/>
</dbReference>
<dbReference type="PANTHER" id="PTHR33866:SF1">
    <property type="entry name" value="S-ADENOSYLMETHIONINE DECARBOXYLASE PROENZYME"/>
    <property type="match status" value="1"/>
</dbReference>
<dbReference type="Pfam" id="PF02675">
    <property type="entry name" value="AdoMet_dc"/>
    <property type="match status" value="1"/>
</dbReference>
<dbReference type="PIRSF" id="PIRSF001356">
    <property type="entry name" value="SAM_decarboxylas"/>
    <property type="match status" value="1"/>
</dbReference>
<dbReference type="SUPFAM" id="SSF56276">
    <property type="entry name" value="S-adenosylmethionine decarboxylase"/>
    <property type="match status" value="1"/>
</dbReference>
<proteinExistence type="inferred from homology"/>
<name>SPED_SALSV</name>
<accession>B4TXL6</accession>
<keyword id="KW-0068">Autocatalytic cleavage</keyword>
<keyword id="KW-0210">Decarboxylase</keyword>
<keyword id="KW-0456">Lyase</keyword>
<keyword id="KW-0620">Polyamine biosynthesis</keyword>
<keyword id="KW-0670">Pyruvate</keyword>
<keyword id="KW-0949">S-adenosyl-L-methionine</keyword>
<keyword id="KW-0704">Schiff base</keyword>
<keyword id="KW-0745">Spermidine biosynthesis</keyword>
<keyword id="KW-0865">Zymogen</keyword>
<feature type="chain" id="PRO_0000364411" description="S-adenosylmethionine decarboxylase beta chain" evidence="1">
    <location>
        <begin position="1"/>
        <end position="111"/>
    </location>
</feature>
<feature type="chain" id="PRO_0000364412" description="S-adenosylmethionine decarboxylase alpha chain" evidence="1">
    <location>
        <begin position="112"/>
        <end position="264"/>
    </location>
</feature>
<feature type="active site" description="Schiff-base intermediate with substrate; via pyruvic acid" evidence="1">
    <location>
        <position position="112"/>
    </location>
</feature>
<feature type="active site" description="Proton acceptor; for processing activity" evidence="1">
    <location>
        <position position="117"/>
    </location>
</feature>
<feature type="active site" description="Proton donor; for catalytic activity" evidence="1">
    <location>
        <position position="140"/>
    </location>
</feature>
<feature type="site" description="Cleavage (non-hydrolytic); by autolysis" evidence="1">
    <location>
        <begin position="111"/>
        <end position="112"/>
    </location>
</feature>
<feature type="modified residue" description="Pyruvic acid (Ser); by autocatalysis" evidence="1">
    <location>
        <position position="112"/>
    </location>
</feature>
<gene>
    <name evidence="1" type="primary">speD</name>
    <name type="ordered locus">SeSA_A0184</name>
</gene>
<comment type="function">
    <text evidence="1">Catalyzes the decarboxylation of S-adenosylmethionine to S-adenosylmethioninamine (dcAdoMet), the propylamine donor required for the synthesis of the polyamines spermine and spermidine from the diamine putrescine.</text>
</comment>
<comment type="catalytic activity">
    <reaction evidence="1">
        <text>S-adenosyl-L-methionine + H(+) = S-adenosyl 3-(methylsulfanyl)propylamine + CO2</text>
        <dbReference type="Rhea" id="RHEA:15981"/>
        <dbReference type="ChEBI" id="CHEBI:15378"/>
        <dbReference type="ChEBI" id="CHEBI:16526"/>
        <dbReference type="ChEBI" id="CHEBI:57443"/>
        <dbReference type="ChEBI" id="CHEBI:59789"/>
        <dbReference type="EC" id="4.1.1.50"/>
    </reaction>
</comment>
<comment type="cofactor">
    <cofactor evidence="1">
        <name>pyruvate</name>
        <dbReference type="ChEBI" id="CHEBI:15361"/>
    </cofactor>
    <text evidence="1">Binds 1 pyruvoyl group covalently per subunit.</text>
</comment>
<comment type="pathway">
    <text evidence="1">Amine and polyamine biosynthesis; S-adenosylmethioninamine biosynthesis; S-adenosylmethioninamine from S-adenosyl-L-methionine: step 1/1.</text>
</comment>
<comment type="subunit">
    <text evidence="1">Heterooctamer of four alpha and four beta chains arranged as a tetramer of alpha/beta heterodimers.</text>
</comment>
<comment type="PTM">
    <text evidence="1">Is synthesized initially as an inactive proenzyme. Formation of the active enzyme involves a self-maturation process in which the active site pyruvoyl group is generated from an internal serine residue via an autocatalytic post-translational modification. Two non-identical subunits are generated from the proenzyme in this reaction, and the pyruvate is formed at the N-terminus of the alpha chain, which is derived from the carboxyl end of the proenzyme. The post-translation cleavage follows an unusual pathway, termed non-hydrolytic serinolysis, in which the side chain hydroxyl group of the serine supplies its oxygen atom to form the C-terminus of the beta chain, while the remainder of the serine residue undergoes an oxidative deamination to produce ammonia and the pyruvoyl group blocking the N-terminus of the alpha chain.</text>
</comment>
<comment type="similarity">
    <text evidence="1">Belongs to the prokaryotic AdoMetDC family. Type 2 subfamily.</text>
</comment>